<sequence>MSEYRIQGATGEWEVVIGLEVHAQVTSNAKLFSGAATAFGAEPNTQVSLVDAAMPGMLPVPNRECIRQAVRTGMAINAQINKWSRFDRKNYFYADLPQGYQISQLYHPIVGEGSIEVQLDDKNPESLKTIGIERIHVEQDAGKLMHDQHPTMSYVDLNRSGVALMEIVSRPDMRSPAEAGAYLSKLRTILRYVGSCDGNMDQGSMRADVNVSVRRPGEPFGTRTETKNVNSVRFVMAVVEQEAKRQVALIEDGGTVVQETRLYDPDRNETRSMRSKEDAHDYRYFPDPDLLPLELDDAFLEECRASLPELPDAKRHRYETALGLSAYNAGVLTADVETARWFEALLAETAAKAKKPEAEVAKQAANWLISELFGALNKLGASLETSPVTPAAGAELLALIADGTISGSIAKQVLEKMLETGDGAAAIVEREGLKQTSDTGAIEAAIDGILAANADKVGQYKAGKEALFGFFVGQTMKAMQGKANPGVVNELLRKKLG</sequence>
<keyword id="KW-0067">ATP-binding</keyword>
<keyword id="KW-0436">Ligase</keyword>
<keyword id="KW-0547">Nucleotide-binding</keyword>
<keyword id="KW-0648">Protein biosynthesis</keyword>
<keyword id="KW-1185">Reference proteome</keyword>
<protein>
    <recommendedName>
        <fullName evidence="1">Aspartyl/glutamyl-tRNA(Asn/Gln) amidotransferase subunit B</fullName>
        <shortName evidence="1">Asp/Glu-ADT subunit B</shortName>
        <ecNumber evidence="1">6.3.5.-</ecNumber>
    </recommendedName>
</protein>
<comment type="function">
    <text evidence="1">Allows the formation of correctly charged Asn-tRNA(Asn) or Gln-tRNA(Gln) through the transamidation of misacylated Asp-tRNA(Asn) or Glu-tRNA(Gln) in organisms which lack either or both of asparaginyl-tRNA or glutaminyl-tRNA synthetases. The reaction takes place in the presence of glutamine and ATP through an activated phospho-Asp-tRNA(Asn) or phospho-Glu-tRNA(Gln).</text>
</comment>
<comment type="catalytic activity">
    <reaction evidence="1">
        <text>L-glutamyl-tRNA(Gln) + L-glutamine + ATP + H2O = L-glutaminyl-tRNA(Gln) + L-glutamate + ADP + phosphate + H(+)</text>
        <dbReference type="Rhea" id="RHEA:17521"/>
        <dbReference type="Rhea" id="RHEA-COMP:9681"/>
        <dbReference type="Rhea" id="RHEA-COMP:9684"/>
        <dbReference type="ChEBI" id="CHEBI:15377"/>
        <dbReference type="ChEBI" id="CHEBI:15378"/>
        <dbReference type="ChEBI" id="CHEBI:29985"/>
        <dbReference type="ChEBI" id="CHEBI:30616"/>
        <dbReference type="ChEBI" id="CHEBI:43474"/>
        <dbReference type="ChEBI" id="CHEBI:58359"/>
        <dbReference type="ChEBI" id="CHEBI:78520"/>
        <dbReference type="ChEBI" id="CHEBI:78521"/>
        <dbReference type="ChEBI" id="CHEBI:456216"/>
    </reaction>
</comment>
<comment type="catalytic activity">
    <reaction evidence="1">
        <text>L-aspartyl-tRNA(Asn) + L-glutamine + ATP + H2O = L-asparaginyl-tRNA(Asn) + L-glutamate + ADP + phosphate + 2 H(+)</text>
        <dbReference type="Rhea" id="RHEA:14513"/>
        <dbReference type="Rhea" id="RHEA-COMP:9674"/>
        <dbReference type="Rhea" id="RHEA-COMP:9677"/>
        <dbReference type="ChEBI" id="CHEBI:15377"/>
        <dbReference type="ChEBI" id="CHEBI:15378"/>
        <dbReference type="ChEBI" id="CHEBI:29985"/>
        <dbReference type="ChEBI" id="CHEBI:30616"/>
        <dbReference type="ChEBI" id="CHEBI:43474"/>
        <dbReference type="ChEBI" id="CHEBI:58359"/>
        <dbReference type="ChEBI" id="CHEBI:78515"/>
        <dbReference type="ChEBI" id="CHEBI:78516"/>
        <dbReference type="ChEBI" id="CHEBI:456216"/>
    </reaction>
</comment>
<comment type="subunit">
    <text evidence="1">Heterotrimer of A, B and C subunits.</text>
</comment>
<comment type="similarity">
    <text evidence="1">Belongs to the GatB/GatE family. GatB subfamily.</text>
</comment>
<dbReference type="EC" id="6.3.5.-" evidence="1"/>
<dbReference type="EMBL" id="CP000248">
    <property type="protein sequence ID" value="ABD27267.1"/>
    <property type="molecule type" value="Genomic_DNA"/>
</dbReference>
<dbReference type="RefSeq" id="WP_011446471.1">
    <property type="nucleotide sequence ID" value="NC_007794.1"/>
</dbReference>
<dbReference type="SMR" id="Q2G4F6"/>
<dbReference type="STRING" id="279238.Saro_2831"/>
<dbReference type="KEGG" id="nar:Saro_2831"/>
<dbReference type="eggNOG" id="COG0064">
    <property type="taxonomic scope" value="Bacteria"/>
</dbReference>
<dbReference type="HOGENOM" id="CLU_019240_0_0_5"/>
<dbReference type="Proteomes" id="UP000009134">
    <property type="component" value="Chromosome"/>
</dbReference>
<dbReference type="GO" id="GO:0050566">
    <property type="term" value="F:asparaginyl-tRNA synthase (glutamine-hydrolyzing) activity"/>
    <property type="evidence" value="ECO:0007669"/>
    <property type="project" value="RHEA"/>
</dbReference>
<dbReference type="GO" id="GO:0005524">
    <property type="term" value="F:ATP binding"/>
    <property type="evidence" value="ECO:0007669"/>
    <property type="project" value="UniProtKB-KW"/>
</dbReference>
<dbReference type="GO" id="GO:0050567">
    <property type="term" value="F:glutaminyl-tRNA synthase (glutamine-hydrolyzing) activity"/>
    <property type="evidence" value="ECO:0007669"/>
    <property type="project" value="UniProtKB-UniRule"/>
</dbReference>
<dbReference type="GO" id="GO:0070681">
    <property type="term" value="P:glutaminyl-tRNAGln biosynthesis via transamidation"/>
    <property type="evidence" value="ECO:0007669"/>
    <property type="project" value="TreeGrafter"/>
</dbReference>
<dbReference type="GO" id="GO:0006412">
    <property type="term" value="P:translation"/>
    <property type="evidence" value="ECO:0007669"/>
    <property type="project" value="UniProtKB-UniRule"/>
</dbReference>
<dbReference type="FunFam" id="1.10.10.410:FF:000001">
    <property type="entry name" value="Aspartyl/glutamyl-tRNA(Asn/Gln) amidotransferase subunit B"/>
    <property type="match status" value="1"/>
</dbReference>
<dbReference type="Gene3D" id="1.10.10.410">
    <property type="match status" value="1"/>
</dbReference>
<dbReference type="Gene3D" id="1.10.150.380">
    <property type="entry name" value="GatB domain, N-terminal subdomain"/>
    <property type="match status" value="1"/>
</dbReference>
<dbReference type="HAMAP" id="MF_00121">
    <property type="entry name" value="GatB"/>
    <property type="match status" value="1"/>
</dbReference>
<dbReference type="InterPro" id="IPR017959">
    <property type="entry name" value="Asn/Gln-tRNA_amidoTrfase_suB/E"/>
</dbReference>
<dbReference type="InterPro" id="IPR006075">
    <property type="entry name" value="Asn/Gln-tRNA_Trfase_suB/E_cat"/>
</dbReference>
<dbReference type="InterPro" id="IPR018027">
    <property type="entry name" value="Asn/Gln_amidotransferase"/>
</dbReference>
<dbReference type="InterPro" id="IPR003789">
    <property type="entry name" value="Asn/Gln_tRNA_amidoTrase-B-like"/>
</dbReference>
<dbReference type="InterPro" id="IPR004413">
    <property type="entry name" value="GatB"/>
</dbReference>
<dbReference type="InterPro" id="IPR042114">
    <property type="entry name" value="GatB_C_1"/>
</dbReference>
<dbReference type="InterPro" id="IPR023168">
    <property type="entry name" value="GatB_Yqey_C_2"/>
</dbReference>
<dbReference type="InterPro" id="IPR017958">
    <property type="entry name" value="Gln-tRNA_amidoTrfase_suB_CS"/>
</dbReference>
<dbReference type="InterPro" id="IPR014746">
    <property type="entry name" value="Gln_synth/guanido_kin_cat_dom"/>
</dbReference>
<dbReference type="NCBIfam" id="TIGR00133">
    <property type="entry name" value="gatB"/>
    <property type="match status" value="1"/>
</dbReference>
<dbReference type="NCBIfam" id="NF004012">
    <property type="entry name" value="PRK05477.1-2"/>
    <property type="match status" value="1"/>
</dbReference>
<dbReference type="NCBIfam" id="NF004014">
    <property type="entry name" value="PRK05477.1-4"/>
    <property type="match status" value="1"/>
</dbReference>
<dbReference type="NCBIfam" id="NF004015">
    <property type="entry name" value="PRK05477.1-5"/>
    <property type="match status" value="1"/>
</dbReference>
<dbReference type="PANTHER" id="PTHR11659">
    <property type="entry name" value="GLUTAMYL-TRNA GLN AMIDOTRANSFERASE SUBUNIT B MITOCHONDRIAL AND PROKARYOTIC PET112-RELATED"/>
    <property type="match status" value="1"/>
</dbReference>
<dbReference type="PANTHER" id="PTHR11659:SF0">
    <property type="entry name" value="GLUTAMYL-TRNA(GLN) AMIDOTRANSFERASE SUBUNIT B, MITOCHONDRIAL"/>
    <property type="match status" value="1"/>
</dbReference>
<dbReference type="Pfam" id="PF02934">
    <property type="entry name" value="GatB_N"/>
    <property type="match status" value="1"/>
</dbReference>
<dbReference type="Pfam" id="PF02637">
    <property type="entry name" value="GatB_Yqey"/>
    <property type="match status" value="1"/>
</dbReference>
<dbReference type="SMART" id="SM00845">
    <property type="entry name" value="GatB_Yqey"/>
    <property type="match status" value="1"/>
</dbReference>
<dbReference type="SUPFAM" id="SSF89095">
    <property type="entry name" value="GatB/YqeY motif"/>
    <property type="match status" value="1"/>
</dbReference>
<dbReference type="SUPFAM" id="SSF55931">
    <property type="entry name" value="Glutamine synthetase/guanido kinase"/>
    <property type="match status" value="1"/>
</dbReference>
<dbReference type="PROSITE" id="PS01234">
    <property type="entry name" value="GATB"/>
    <property type="match status" value="1"/>
</dbReference>
<feature type="chain" id="PRO_0000241249" description="Aspartyl/glutamyl-tRNA(Asn/Gln) amidotransferase subunit B">
    <location>
        <begin position="1"/>
        <end position="497"/>
    </location>
</feature>
<organism>
    <name type="scientific">Novosphingobium aromaticivorans (strain ATCC 700278 / DSM 12444 / CCUG 56034 / CIP 105152 / NBRC 16084 / F199)</name>
    <dbReference type="NCBI Taxonomy" id="279238"/>
    <lineage>
        <taxon>Bacteria</taxon>
        <taxon>Pseudomonadati</taxon>
        <taxon>Pseudomonadota</taxon>
        <taxon>Alphaproteobacteria</taxon>
        <taxon>Sphingomonadales</taxon>
        <taxon>Sphingomonadaceae</taxon>
        <taxon>Novosphingobium</taxon>
    </lineage>
</organism>
<evidence type="ECO:0000255" key="1">
    <source>
        <dbReference type="HAMAP-Rule" id="MF_00121"/>
    </source>
</evidence>
<reference key="1">
    <citation type="submission" date="2006-01" db="EMBL/GenBank/DDBJ databases">
        <title>Complete sequence of Novosphingobium aromaticivorans DSM 12444.</title>
        <authorList>
            <consortium name="US DOE Joint Genome Institute"/>
            <person name="Copeland A."/>
            <person name="Lucas S."/>
            <person name="Lapidus A."/>
            <person name="Barry K."/>
            <person name="Detter J.C."/>
            <person name="Glavina T."/>
            <person name="Hammon N."/>
            <person name="Israni S."/>
            <person name="Pitluck S."/>
            <person name="Chain P."/>
            <person name="Malfatti S."/>
            <person name="Shin M."/>
            <person name="Vergez L."/>
            <person name="Schmutz J."/>
            <person name="Larimer F."/>
            <person name="Land M."/>
            <person name="Kyrpides N."/>
            <person name="Ivanova N."/>
            <person name="Fredrickson J."/>
            <person name="Balkwill D."/>
            <person name="Romine M.F."/>
            <person name="Richardson P."/>
        </authorList>
    </citation>
    <scope>NUCLEOTIDE SEQUENCE [LARGE SCALE GENOMIC DNA]</scope>
    <source>
        <strain>ATCC 700278 / DSM 12444 / CCUG 56034 / CIP 105152 / NBRC 16084 / F199</strain>
    </source>
</reference>
<accession>Q2G4F6</accession>
<gene>
    <name evidence="1" type="primary">gatB</name>
    <name type="ordered locus">Saro_2831</name>
</gene>
<name>GATB_NOVAD</name>
<proteinExistence type="inferred from homology"/>